<sequence>MLRNQSVGNGVSKQASAKAATFSTINSTLAADDMFKRNFVSYLPLNNEDNDILFPSIKTIKFIEMLHGKKEFFKGQSIHSVLRDSAVFKKQMFYTLSHTLLNSISIQQINAEWQRHLKAFPFRSKGMSFQEYFNIWYYAIKQVILEGILQTINYILQNLDNDIYNKYIDWICTIGITPIVTLPKNKVTLTPLAKSISSRLIQEIIRNKQNFLLHILTQISSTSIADFTNINIYRNKSDGNITCLSNNKELEYFVYSAPYFINNQLLFTTPLAHLYSELNKHENLHRHRKMCQLLNTFPIKVLTTSKNSVDNKKILELIEREEKTSDAKKSLIKFLLNLSDSKSKIGITDSIEGFLQDITPSIIDQNKLLISKGNLQRRGQDNNDRDIRDIFKKQIIKCMEEQIQSQLDEIETLKTANRLFENKIKDMHSLINLSETSKHDFTLDSDIESLSLAKALNKVQSLPFTSVSIDDTRAVANSFFSQYIPDIEYADKKIDQLWETEYTRTFRLRKNVNNQGQEDSISYSNYTLELLLIPFMKHVLKLRHFELLPEEFLFLSLKEIMLAVYSNCKIKHYLRLIYIRQINELSHLIHTQKQSDLTLTPDLGSTNPEDFQYPQDDVASKLKRIRNSRHIQYIKRPEYL</sequence>
<keyword id="KW-1048">Host nucleus</keyword>
<keyword id="KW-1185">Reference proteome</keyword>
<keyword id="KW-0231">Viral genome packaging</keyword>
<keyword id="KW-1188">Viral release from host cell</keyword>
<keyword id="KW-0946">Virion</keyword>
<feature type="chain" id="PRO_0000115909" description="Portal protein">
    <location>
        <begin position="1"/>
        <end position="640"/>
    </location>
</feature>
<protein>
    <recommendedName>
        <fullName evidence="1">Portal protein</fullName>
    </recommendedName>
</protein>
<accession>P52455</accession>
<proteinExistence type="inferred from homology"/>
<evidence type="ECO:0000255" key="1">
    <source>
        <dbReference type="HAMAP-Rule" id="MF_04012"/>
    </source>
</evidence>
<dbReference type="EMBL" id="U43400">
    <property type="protein sequence ID" value="AAC54737.1"/>
    <property type="molecule type" value="Genomic_DNA"/>
</dbReference>
<dbReference type="PIR" id="T41977">
    <property type="entry name" value="T41977"/>
</dbReference>
<dbReference type="SMR" id="P52455"/>
<dbReference type="Proteomes" id="UP000009246">
    <property type="component" value="Segment"/>
</dbReference>
<dbReference type="GO" id="GO:0042025">
    <property type="term" value="C:host cell nucleus"/>
    <property type="evidence" value="ECO:0007669"/>
    <property type="project" value="UniProtKB-SubCell"/>
</dbReference>
<dbReference type="GO" id="GO:0044423">
    <property type="term" value="C:virion component"/>
    <property type="evidence" value="ECO:0007669"/>
    <property type="project" value="UniProtKB-KW"/>
</dbReference>
<dbReference type="GO" id="GO:0051276">
    <property type="term" value="P:chromosome organization"/>
    <property type="evidence" value="ECO:0007669"/>
    <property type="project" value="InterPro"/>
</dbReference>
<dbReference type="HAMAP" id="MF_04012">
    <property type="entry name" value="HSV_PORTL"/>
    <property type="match status" value="1"/>
</dbReference>
<dbReference type="InterPro" id="IPR002660">
    <property type="entry name" value="Herpes_Portal"/>
</dbReference>
<dbReference type="Pfam" id="PF01763">
    <property type="entry name" value="Herpes_UL6"/>
    <property type="match status" value="1"/>
</dbReference>
<name>PORTL_HHV7J</name>
<comment type="function">
    <text evidence="1">Forms a portal in the viral capsid through which viral DNA is translocated during DNA packaging. Assembles as a dodecamer at a single fivefold axe of the T=16 icosahedric capsid. Binds to the molecular motor that translocates the viral DNA, termed terminase.</text>
</comment>
<comment type="subunit">
    <text evidence="1">Homododecamerizes. Interacts with terminase subunits TRM1 and TRM3.</text>
</comment>
<comment type="subcellular location">
    <subcellularLocation>
        <location evidence="1">Virion</location>
    </subcellularLocation>
    <subcellularLocation>
        <location evidence="1">Host nucleus</location>
    </subcellularLocation>
</comment>
<comment type="similarity">
    <text evidence="1">Belongs to the herpesviridae portal protein family.</text>
</comment>
<gene>
    <name type="primary">U76</name>
</gene>
<organism>
    <name type="scientific">Human herpesvirus 7 (strain JI)</name>
    <name type="common">HHV-7</name>
    <name type="synonym">Human T lymphotropic virus</name>
    <dbReference type="NCBI Taxonomy" id="57278"/>
    <lineage>
        <taxon>Viruses</taxon>
        <taxon>Duplodnaviria</taxon>
        <taxon>Heunggongvirae</taxon>
        <taxon>Peploviricota</taxon>
        <taxon>Herviviricetes</taxon>
        <taxon>Herpesvirales</taxon>
        <taxon>Orthoherpesviridae</taxon>
        <taxon>Betaherpesvirinae</taxon>
        <taxon>Roseolovirus</taxon>
        <taxon>Roseolovirus humanbeta7</taxon>
        <taxon>Human betaherpesvirus 7</taxon>
    </lineage>
</organism>
<reference key="1">
    <citation type="journal article" date="1996" name="J. Virol.">
        <title>Determination and analysis of the complete nucleotide sequence of human herpesvirus.</title>
        <authorList>
            <person name="Nicholas J."/>
        </authorList>
    </citation>
    <scope>NUCLEOTIDE SEQUENCE [LARGE SCALE GENOMIC DNA]</scope>
</reference>
<organismHost>
    <name type="scientific">Homo sapiens</name>
    <name type="common">Human</name>
    <dbReference type="NCBI Taxonomy" id="9606"/>
</organismHost>